<organism>
    <name type="scientific">Methylobacterium radiotolerans (strain ATCC 27329 / DSM 1819 / JCM 2831 / NBRC 15690 / NCIMB 10815 / 0-1)</name>
    <dbReference type="NCBI Taxonomy" id="426355"/>
    <lineage>
        <taxon>Bacteria</taxon>
        <taxon>Pseudomonadati</taxon>
        <taxon>Pseudomonadota</taxon>
        <taxon>Alphaproteobacteria</taxon>
        <taxon>Hyphomicrobiales</taxon>
        <taxon>Methylobacteriaceae</taxon>
        <taxon>Methylobacterium</taxon>
    </lineage>
</organism>
<reference key="1">
    <citation type="submission" date="2008-03" db="EMBL/GenBank/DDBJ databases">
        <title>Complete sequence of chromosome of Methylobacterium radiotolerans JCM 2831.</title>
        <authorList>
            <consortium name="US DOE Joint Genome Institute"/>
            <person name="Copeland A."/>
            <person name="Lucas S."/>
            <person name="Lapidus A."/>
            <person name="Glavina del Rio T."/>
            <person name="Dalin E."/>
            <person name="Tice H."/>
            <person name="Bruce D."/>
            <person name="Goodwin L."/>
            <person name="Pitluck S."/>
            <person name="Kiss H."/>
            <person name="Brettin T."/>
            <person name="Detter J.C."/>
            <person name="Han C."/>
            <person name="Kuske C.R."/>
            <person name="Schmutz J."/>
            <person name="Larimer F."/>
            <person name="Land M."/>
            <person name="Hauser L."/>
            <person name="Kyrpides N."/>
            <person name="Mikhailova N."/>
            <person name="Marx C.J."/>
            <person name="Richardson P."/>
        </authorList>
    </citation>
    <scope>NUCLEOTIDE SEQUENCE [LARGE SCALE GENOMIC DNA]</scope>
    <source>
        <strain>ATCC 27329 / DSM 1819 / JCM 2831 / NBRC 15690 / NCIMB 10815 / 0-1</strain>
    </source>
</reference>
<name>RUTB_METRJ</name>
<gene>
    <name evidence="1" type="primary">rutB</name>
    <name type="ordered locus">Mrad2831_1583</name>
</gene>
<keyword id="KW-0378">Hydrolase</keyword>
<feature type="chain" id="PRO_0000402696" description="Ureidoacrylate amidohydrolase RutB">
    <location>
        <begin position="1"/>
        <end position="258"/>
    </location>
</feature>
<feature type="region of interest" description="Disordered" evidence="2">
    <location>
        <begin position="1"/>
        <end position="23"/>
    </location>
</feature>
<feature type="active site" description="Proton acceptor" evidence="1">
    <location>
        <position position="47"/>
    </location>
</feature>
<feature type="active site" evidence="1">
    <location>
        <position position="156"/>
    </location>
</feature>
<feature type="active site" description="Nucleophile" evidence="1">
    <location>
        <position position="189"/>
    </location>
</feature>
<protein>
    <recommendedName>
        <fullName evidence="1">Ureidoacrylate amidohydrolase RutB</fullName>
        <ecNumber evidence="1">3.5.1.110</ecNumber>
    </recommendedName>
</protein>
<evidence type="ECO:0000255" key="1">
    <source>
        <dbReference type="HAMAP-Rule" id="MF_00830"/>
    </source>
</evidence>
<evidence type="ECO:0000256" key="2">
    <source>
        <dbReference type="SAM" id="MobiDB-lite"/>
    </source>
</evidence>
<dbReference type="EC" id="3.5.1.110" evidence="1"/>
<dbReference type="EMBL" id="CP001001">
    <property type="protein sequence ID" value="ACB23578.1"/>
    <property type="molecule type" value="Genomic_DNA"/>
</dbReference>
<dbReference type="RefSeq" id="WP_012318566.1">
    <property type="nucleotide sequence ID" value="NC_010505.1"/>
</dbReference>
<dbReference type="SMR" id="B1M6B8"/>
<dbReference type="STRING" id="426355.Mrad2831_1583"/>
<dbReference type="GeneID" id="6137611"/>
<dbReference type="KEGG" id="mrd:Mrad2831_1583"/>
<dbReference type="eggNOG" id="COG1335">
    <property type="taxonomic scope" value="Bacteria"/>
</dbReference>
<dbReference type="HOGENOM" id="CLU_068979_8_0_5"/>
<dbReference type="Proteomes" id="UP000006589">
    <property type="component" value="Chromosome"/>
</dbReference>
<dbReference type="GO" id="GO:0016811">
    <property type="term" value="F:hydrolase activity, acting on carbon-nitrogen (but not peptide) bonds, in linear amides"/>
    <property type="evidence" value="ECO:0007669"/>
    <property type="project" value="UniProtKB-UniRule"/>
</dbReference>
<dbReference type="GO" id="GO:0019740">
    <property type="term" value="P:nitrogen utilization"/>
    <property type="evidence" value="ECO:0007669"/>
    <property type="project" value="UniProtKB-UniRule"/>
</dbReference>
<dbReference type="GO" id="GO:0006212">
    <property type="term" value="P:uracil catabolic process"/>
    <property type="evidence" value="ECO:0007669"/>
    <property type="project" value="UniProtKB-UniRule"/>
</dbReference>
<dbReference type="CDD" id="cd00431">
    <property type="entry name" value="cysteine_hydrolases"/>
    <property type="match status" value="1"/>
</dbReference>
<dbReference type="Gene3D" id="3.40.50.850">
    <property type="entry name" value="Isochorismatase-like"/>
    <property type="match status" value="1"/>
</dbReference>
<dbReference type="HAMAP" id="MF_00830">
    <property type="entry name" value="RutB"/>
    <property type="match status" value="1"/>
</dbReference>
<dbReference type="InterPro" id="IPR000868">
    <property type="entry name" value="Isochorismatase-like_dom"/>
</dbReference>
<dbReference type="InterPro" id="IPR050272">
    <property type="entry name" value="Isochorismatase-like_hydrls"/>
</dbReference>
<dbReference type="InterPro" id="IPR036380">
    <property type="entry name" value="Isochorismatase-like_sf"/>
</dbReference>
<dbReference type="InterPro" id="IPR019916">
    <property type="entry name" value="RutB"/>
</dbReference>
<dbReference type="NCBIfam" id="TIGR03614">
    <property type="entry name" value="RutB"/>
    <property type="match status" value="1"/>
</dbReference>
<dbReference type="PANTHER" id="PTHR43540:SF6">
    <property type="entry name" value="ISOCHORISMATASE-LIKE DOMAIN-CONTAINING PROTEIN"/>
    <property type="match status" value="1"/>
</dbReference>
<dbReference type="PANTHER" id="PTHR43540">
    <property type="entry name" value="PEROXYUREIDOACRYLATE/UREIDOACRYLATE AMIDOHYDROLASE-RELATED"/>
    <property type="match status" value="1"/>
</dbReference>
<dbReference type="Pfam" id="PF00857">
    <property type="entry name" value="Isochorismatase"/>
    <property type="match status" value="1"/>
</dbReference>
<dbReference type="SUPFAM" id="SSF52499">
    <property type="entry name" value="Isochorismatase-like hydrolases"/>
    <property type="match status" value="1"/>
</dbReference>
<accession>B1M6B8</accession>
<proteinExistence type="inferred from homology"/>
<comment type="function">
    <text evidence="1">Hydrolyzes ureidoacrylate to form aminoacrylate and carbamate. The carbamate hydrolyzes spontaneously, thereby releasing one of the nitrogen atoms of the pyrimidine ring as ammonia and one of its carbon atoms as CO2.</text>
</comment>
<comment type="catalytic activity">
    <reaction evidence="1">
        <text>(Z)-3-ureidoacrylate + H2O + H(+) = (Z)-3-aminoacrylate + NH4(+) + CO2</text>
        <dbReference type="Rhea" id="RHEA:42624"/>
        <dbReference type="ChEBI" id="CHEBI:15377"/>
        <dbReference type="ChEBI" id="CHEBI:15378"/>
        <dbReference type="ChEBI" id="CHEBI:16526"/>
        <dbReference type="ChEBI" id="CHEBI:28938"/>
        <dbReference type="ChEBI" id="CHEBI:59891"/>
        <dbReference type="ChEBI" id="CHEBI:59894"/>
        <dbReference type="EC" id="3.5.1.110"/>
    </reaction>
</comment>
<comment type="catalytic activity">
    <reaction evidence="1">
        <text>(Z)-3-ureidoacrylate + H2O = (Z)-3-aminoacrylate + carbamate + H(+)</text>
        <dbReference type="Rhea" id="RHEA:31603"/>
        <dbReference type="ChEBI" id="CHEBI:13941"/>
        <dbReference type="ChEBI" id="CHEBI:15377"/>
        <dbReference type="ChEBI" id="CHEBI:15378"/>
        <dbReference type="ChEBI" id="CHEBI:59891"/>
        <dbReference type="ChEBI" id="CHEBI:59894"/>
    </reaction>
</comment>
<comment type="catalytic activity">
    <reaction evidence="1">
        <text>(Z)-2-methylureidoacrylate + H2O + H(+) = (Z)-2-methylaminoacrylate + NH4(+) + CO2</text>
        <dbReference type="Rhea" id="RHEA:42620"/>
        <dbReference type="ChEBI" id="CHEBI:15377"/>
        <dbReference type="ChEBI" id="CHEBI:15378"/>
        <dbReference type="ChEBI" id="CHEBI:16526"/>
        <dbReference type="ChEBI" id="CHEBI:28938"/>
        <dbReference type="ChEBI" id="CHEBI:143783"/>
        <dbReference type="ChEBI" id="CHEBI:145735"/>
        <dbReference type="EC" id="3.5.1.110"/>
    </reaction>
</comment>
<comment type="similarity">
    <text evidence="1">Belongs to the isochorismatase family. RutB subfamily.</text>
</comment>
<sequence>MDRPTTYPMDQPAGFRDAQGRHGGVVLPARPEPIALDPATTFLIVVDVQNAYASPGGYLDRAGFDVSGTGPVIARIARAVAAARAAGIPVLWFQNGWDPAYVEAGGPGSPNWHKSNALKTMRRNPEANTQLLAKGSWDYALVDALTPEPGDIVMGKPRYSGFYNTPLDSTLRARGVTTLVFTGIATNVCVESTLRDGFHREYFGIVLADATHQAGPESLHRAALANIETFFGWVSDVAAFESALGVPSRAPAGADLAG</sequence>